<protein>
    <recommendedName>
        <fullName evidence="1">Isoleucine--tRNA ligase</fullName>
        <ecNumber evidence="1">6.1.1.5</ecNumber>
    </recommendedName>
    <alternativeName>
        <fullName evidence="1">Isoleucyl-tRNA synthetase</fullName>
        <shortName evidence="1">IleRS</shortName>
    </alternativeName>
</protein>
<comment type="function">
    <text evidence="1">Catalyzes the attachment of isoleucine to tRNA(Ile). As IleRS can inadvertently accommodate and process structurally similar amino acids such as valine, to avoid such errors it has two additional distinct tRNA(Ile)-dependent editing activities. One activity is designated as 'pretransfer' editing and involves the hydrolysis of activated Val-AMP. The other activity is designated 'posttransfer' editing and involves deacylation of mischarged Val-tRNA(Ile).</text>
</comment>
<comment type="catalytic activity">
    <reaction evidence="1">
        <text>tRNA(Ile) + L-isoleucine + ATP = L-isoleucyl-tRNA(Ile) + AMP + diphosphate</text>
        <dbReference type="Rhea" id="RHEA:11060"/>
        <dbReference type="Rhea" id="RHEA-COMP:9666"/>
        <dbReference type="Rhea" id="RHEA-COMP:9695"/>
        <dbReference type="ChEBI" id="CHEBI:30616"/>
        <dbReference type="ChEBI" id="CHEBI:33019"/>
        <dbReference type="ChEBI" id="CHEBI:58045"/>
        <dbReference type="ChEBI" id="CHEBI:78442"/>
        <dbReference type="ChEBI" id="CHEBI:78528"/>
        <dbReference type="ChEBI" id="CHEBI:456215"/>
        <dbReference type="EC" id="6.1.1.5"/>
    </reaction>
</comment>
<comment type="cofactor">
    <cofactor evidence="1">
        <name>Zn(2+)</name>
        <dbReference type="ChEBI" id="CHEBI:29105"/>
    </cofactor>
    <text evidence="1">Binds 1 zinc ion per subunit.</text>
</comment>
<comment type="subunit">
    <text evidence="1">Monomer.</text>
</comment>
<comment type="subcellular location">
    <subcellularLocation>
        <location evidence="1">Cytoplasm</location>
    </subcellularLocation>
</comment>
<comment type="domain">
    <text evidence="1">IleRS has two distinct active sites: one for aminoacylation and one for editing. The misactivated valine is translocated from the active site to the editing site, which sterically excludes the correctly activated isoleucine. The single editing site contains two valyl binding pockets, one specific for each substrate (Val-AMP or Val-tRNA(Ile)).</text>
</comment>
<comment type="similarity">
    <text evidence="1">Belongs to the class-I aminoacyl-tRNA synthetase family. IleS type 1 subfamily.</text>
</comment>
<gene>
    <name evidence="1" type="primary">ileS</name>
    <name type="ordered locus">PERMA_0684</name>
</gene>
<reference key="1">
    <citation type="journal article" date="2009" name="J. Bacteriol.">
        <title>Complete and draft genome sequences of six members of the Aquificales.</title>
        <authorList>
            <person name="Reysenbach A.-L."/>
            <person name="Hamamura N."/>
            <person name="Podar M."/>
            <person name="Griffiths E."/>
            <person name="Ferreira S."/>
            <person name="Hochstein R."/>
            <person name="Heidelberg J."/>
            <person name="Johnson J."/>
            <person name="Mead D."/>
            <person name="Pohorille A."/>
            <person name="Sarmiento M."/>
            <person name="Schweighofer K."/>
            <person name="Seshadri R."/>
            <person name="Voytek M.A."/>
        </authorList>
    </citation>
    <scope>NUCLEOTIDE SEQUENCE [LARGE SCALE GENOMIC DNA]</scope>
    <source>
        <strain>DSM 14350 / EX-H1</strain>
    </source>
</reference>
<organism>
    <name type="scientific">Persephonella marina (strain DSM 14350 / EX-H1)</name>
    <dbReference type="NCBI Taxonomy" id="123214"/>
    <lineage>
        <taxon>Bacteria</taxon>
        <taxon>Pseudomonadati</taxon>
        <taxon>Aquificota</taxon>
        <taxon>Aquificia</taxon>
        <taxon>Aquificales</taxon>
        <taxon>Hydrogenothermaceae</taxon>
        <taxon>Persephonella</taxon>
    </lineage>
</organism>
<dbReference type="EC" id="6.1.1.5" evidence="1"/>
<dbReference type="EMBL" id="CP001230">
    <property type="protein sequence ID" value="ACO03207.1"/>
    <property type="molecule type" value="Genomic_DNA"/>
</dbReference>
<dbReference type="RefSeq" id="WP_012675446.1">
    <property type="nucleotide sequence ID" value="NC_012440.1"/>
</dbReference>
<dbReference type="SMR" id="C0QP76"/>
<dbReference type="STRING" id="123214.PERMA_0684"/>
<dbReference type="PaxDb" id="123214-PERMA_0684"/>
<dbReference type="KEGG" id="pmx:PERMA_0684"/>
<dbReference type="eggNOG" id="COG0060">
    <property type="taxonomic scope" value="Bacteria"/>
</dbReference>
<dbReference type="HOGENOM" id="CLU_001493_7_0_0"/>
<dbReference type="OrthoDB" id="9810365at2"/>
<dbReference type="Proteomes" id="UP000001366">
    <property type="component" value="Chromosome"/>
</dbReference>
<dbReference type="GO" id="GO:0005829">
    <property type="term" value="C:cytosol"/>
    <property type="evidence" value="ECO:0007669"/>
    <property type="project" value="TreeGrafter"/>
</dbReference>
<dbReference type="GO" id="GO:0002161">
    <property type="term" value="F:aminoacyl-tRNA deacylase activity"/>
    <property type="evidence" value="ECO:0007669"/>
    <property type="project" value="InterPro"/>
</dbReference>
<dbReference type="GO" id="GO:0005524">
    <property type="term" value="F:ATP binding"/>
    <property type="evidence" value="ECO:0007669"/>
    <property type="project" value="UniProtKB-UniRule"/>
</dbReference>
<dbReference type="GO" id="GO:0004822">
    <property type="term" value="F:isoleucine-tRNA ligase activity"/>
    <property type="evidence" value="ECO:0007669"/>
    <property type="project" value="UniProtKB-UniRule"/>
</dbReference>
<dbReference type="GO" id="GO:0000049">
    <property type="term" value="F:tRNA binding"/>
    <property type="evidence" value="ECO:0007669"/>
    <property type="project" value="InterPro"/>
</dbReference>
<dbReference type="GO" id="GO:0008270">
    <property type="term" value="F:zinc ion binding"/>
    <property type="evidence" value="ECO:0007669"/>
    <property type="project" value="UniProtKB-UniRule"/>
</dbReference>
<dbReference type="GO" id="GO:0006428">
    <property type="term" value="P:isoleucyl-tRNA aminoacylation"/>
    <property type="evidence" value="ECO:0007669"/>
    <property type="project" value="UniProtKB-UniRule"/>
</dbReference>
<dbReference type="CDD" id="cd07960">
    <property type="entry name" value="Anticodon_Ia_Ile_BEm"/>
    <property type="match status" value="1"/>
</dbReference>
<dbReference type="CDD" id="cd00818">
    <property type="entry name" value="IleRS_core"/>
    <property type="match status" value="1"/>
</dbReference>
<dbReference type="FunFam" id="1.10.730.20:FF:000001">
    <property type="entry name" value="Isoleucine--tRNA ligase"/>
    <property type="match status" value="1"/>
</dbReference>
<dbReference type="FunFam" id="3.40.50.620:FF:000152">
    <property type="entry name" value="Isoleucine--tRNA ligase"/>
    <property type="match status" value="1"/>
</dbReference>
<dbReference type="Gene3D" id="1.10.730.20">
    <property type="match status" value="1"/>
</dbReference>
<dbReference type="Gene3D" id="3.40.50.620">
    <property type="entry name" value="HUPs"/>
    <property type="match status" value="2"/>
</dbReference>
<dbReference type="Gene3D" id="1.10.10.830">
    <property type="entry name" value="Ile-tRNA synthetase CP2 domain-like"/>
    <property type="match status" value="1"/>
</dbReference>
<dbReference type="HAMAP" id="MF_02002">
    <property type="entry name" value="Ile_tRNA_synth_type1"/>
    <property type="match status" value="1"/>
</dbReference>
<dbReference type="InterPro" id="IPR001412">
    <property type="entry name" value="aa-tRNA-synth_I_CS"/>
</dbReference>
<dbReference type="InterPro" id="IPR002300">
    <property type="entry name" value="aa-tRNA-synth_Ia"/>
</dbReference>
<dbReference type="InterPro" id="IPR033708">
    <property type="entry name" value="Anticodon_Ile_BEm"/>
</dbReference>
<dbReference type="InterPro" id="IPR002301">
    <property type="entry name" value="Ile-tRNA-ligase"/>
</dbReference>
<dbReference type="InterPro" id="IPR023585">
    <property type="entry name" value="Ile-tRNA-ligase_type1"/>
</dbReference>
<dbReference type="InterPro" id="IPR050081">
    <property type="entry name" value="Ile-tRNA_ligase"/>
</dbReference>
<dbReference type="InterPro" id="IPR013155">
    <property type="entry name" value="M/V/L/I-tRNA-synth_anticd-bd"/>
</dbReference>
<dbReference type="InterPro" id="IPR014729">
    <property type="entry name" value="Rossmann-like_a/b/a_fold"/>
</dbReference>
<dbReference type="InterPro" id="IPR009080">
    <property type="entry name" value="tRNAsynth_Ia_anticodon-bd"/>
</dbReference>
<dbReference type="InterPro" id="IPR009008">
    <property type="entry name" value="Val/Leu/Ile-tRNA-synth_edit"/>
</dbReference>
<dbReference type="InterPro" id="IPR010663">
    <property type="entry name" value="Znf_FPG/IleRS"/>
</dbReference>
<dbReference type="NCBIfam" id="TIGR00392">
    <property type="entry name" value="ileS"/>
    <property type="match status" value="1"/>
</dbReference>
<dbReference type="PANTHER" id="PTHR42765:SF1">
    <property type="entry name" value="ISOLEUCINE--TRNA LIGASE, MITOCHONDRIAL"/>
    <property type="match status" value="1"/>
</dbReference>
<dbReference type="PANTHER" id="PTHR42765">
    <property type="entry name" value="SOLEUCYL-TRNA SYNTHETASE"/>
    <property type="match status" value="1"/>
</dbReference>
<dbReference type="Pfam" id="PF08264">
    <property type="entry name" value="Anticodon_1"/>
    <property type="match status" value="1"/>
</dbReference>
<dbReference type="Pfam" id="PF00133">
    <property type="entry name" value="tRNA-synt_1"/>
    <property type="match status" value="1"/>
</dbReference>
<dbReference type="Pfam" id="PF06827">
    <property type="entry name" value="zf-FPG_IleRS"/>
    <property type="match status" value="1"/>
</dbReference>
<dbReference type="PRINTS" id="PR00984">
    <property type="entry name" value="TRNASYNTHILE"/>
</dbReference>
<dbReference type="SUPFAM" id="SSF47323">
    <property type="entry name" value="Anticodon-binding domain of a subclass of class I aminoacyl-tRNA synthetases"/>
    <property type="match status" value="1"/>
</dbReference>
<dbReference type="SUPFAM" id="SSF52374">
    <property type="entry name" value="Nucleotidylyl transferase"/>
    <property type="match status" value="1"/>
</dbReference>
<dbReference type="SUPFAM" id="SSF50677">
    <property type="entry name" value="ValRS/IleRS/LeuRS editing domain"/>
    <property type="match status" value="1"/>
</dbReference>
<dbReference type="PROSITE" id="PS00178">
    <property type="entry name" value="AA_TRNA_LIGASE_I"/>
    <property type="match status" value="1"/>
</dbReference>
<name>SYI_PERMH</name>
<proteinExistence type="inferred from homology"/>
<feature type="chain" id="PRO_1000216243" description="Isoleucine--tRNA ligase">
    <location>
        <begin position="1"/>
        <end position="947"/>
    </location>
</feature>
<feature type="short sequence motif" description="'HIGH' region">
    <location>
        <begin position="57"/>
        <end position="67"/>
    </location>
</feature>
<feature type="short sequence motif" description="'KMSKS' region">
    <location>
        <begin position="609"/>
        <end position="613"/>
    </location>
</feature>
<feature type="binding site" evidence="1">
    <location>
        <position position="568"/>
    </location>
    <ligand>
        <name>L-isoleucyl-5'-AMP</name>
        <dbReference type="ChEBI" id="CHEBI:178002"/>
    </ligand>
</feature>
<feature type="binding site" evidence="1">
    <location>
        <position position="612"/>
    </location>
    <ligand>
        <name>ATP</name>
        <dbReference type="ChEBI" id="CHEBI:30616"/>
    </ligand>
</feature>
<feature type="binding site" evidence="1">
    <location>
        <position position="908"/>
    </location>
    <ligand>
        <name>Zn(2+)</name>
        <dbReference type="ChEBI" id="CHEBI:29105"/>
    </ligand>
</feature>
<feature type="binding site" evidence="1">
    <location>
        <position position="911"/>
    </location>
    <ligand>
        <name>Zn(2+)</name>
        <dbReference type="ChEBI" id="CHEBI:29105"/>
    </ligand>
</feature>
<feature type="binding site" evidence="1">
    <location>
        <position position="926"/>
    </location>
    <ligand>
        <name>Zn(2+)</name>
        <dbReference type="ChEBI" id="CHEBI:29105"/>
    </ligand>
</feature>
<feature type="binding site" evidence="1">
    <location>
        <position position="929"/>
    </location>
    <ligand>
        <name>Zn(2+)</name>
        <dbReference type="ChEBI" id="CHEBI:29105"/>
    </ligand>
</feature>
<sequence length="947" mass="110771">MEWKDTLNLPKTAFPMKGNLPNKEPEIIKKWEEIDLYKRLREERKGKEKYILHDGPPYANGNIHLGHALNKILKDILVKYESMKGKDAPFVPGWDCHGLPIEQQVEKLLKKEKKRKEDLSKSEFRKLCREYALKYVNIQREEFKRLGIIGNWEKPYLTMRPSYQAQEIRELGKIFRKGIAYRGKKPVYWCIYDKTAEAEAEVEYKEKKDPSIYVAFELVESPFDIKEKVYAVIWTTTPWTLPANLGIMVNPDFDYLFLRSEDKVYIVAKDLLESFSEKTGIEGEVIKEVKGRELEFLEYRHPFIDRVSKIYLSEFVELGTGTGLVHMAPGHGQEDYIIGQRYGVEAFAPVDDEGRFTDEAPEFIQGLRVFEANERIVEKLRENGVLLHHETVKHSYPHCWRCKNPVIFRATPQWFISMDGITEKGETLRGEALKEIERVKWIPHWGENRIKSMIENRPDWCISRQRSWGVPIAVFYCKRCGNIIDDEKVFEHIADLVEKDEFGADIWFEREAEELLPEGYRCPKCDGEEFKKEEDILDVWFDSGVSHASVLKSGFWDELKWPADMYLEGSDQHRGWFQSSLLEGVASYGRAPYDAVLTHGFILDEKGNKMSKSLGNVIPPEKIIKMYGADILRLWVVSEDYTEDIKIGMNLLKSIADDYRKIRNTFRYFLGNLYDFDANKDRVPYENLLEIDRWMLSKLQRLIDRSHSAYSNYRFHKIYHEIKRFVIVDLSAVYLDILKDRLYVYAPDSLERRSAQTVLYELLDSLTKLLAPILSFTTEEIWGYVREINPSVKESIHLEEMPVVNQDYIDPELEETYEKLMKVRDDILKALEEARRSDIIRHPYEAKVVLSLPDEYRSVVEKRIDWIKFFFTVSQVELSDQAEGDVIIGGEKVEGGKIAVKKASGEKCPRCWIYDESVGKDGQPVCDRCMEQLERMEIKISDIEEAK</sequence>
<evidence type="ECO:0000255" key="1">
    <source>
        <dbReference type="HAMAP-Rule" id="MF_02002"/>
    </source>
</evidence>
<accession>C0QP76</accession>
<keyword id="KW-0030">Aminoacyl-tRNA synthetase</keyword>
<keyword id="KW-0067">ATP-binding</keyword>
<keyword id="KW-0963">Cytoplasm</keyword>
<keyword id="KW-0436">Ligase</keyword>
<keyword id="KW-0479">Metal-binding</keyword>
<keyword id="KW-0547">Nucleotide-binding</keyword>
<keyword id="KW-0648">Protein biosynthesis</keyword>
<keyword id="KW-1185">Reference proteome</keyword>
<keyword id="KW-0862">Zinc</keyword>